<proteinExistence type="evidence at protein level"/>
<comment type="function">
    <text evidence="1">Catalyzes the attachment of L-aspartate to tRNA(Asp) in a two-step reaction: L-aspartate is first activated by ATP to form Asp-AMP and then transferred to the acceptor end of tRNA(Asp).</text>
</comment>
<comment type="catalytic activity">
    <reaction evidence="1">
        <text>tRNA(Asp) + L-aspartate + ATP = L-aspartyl-tRNA(Asp) + AMP + diphosphate</text>
        <dbReference type="Rhea" id="RHEA:19649"/>
        <dbReference type="Rhea" id="RHEA-COMP:9660"/>
        <dbReference type="Rhea" id="RHEA-COMP:9678"/>
        <dbReference type="ChEBI" id="CHEBI:29991"/>
        <dbReference type="ChEBI" id="CHEBI:30616"/>
        <dbReference type="ChEBI" id="CHEBI:33019"/>
        <dbReference type="ChEBI" id="CHEBI:78442"/>
        <dbReference type="ChEBI" id="CHEBI:78516"/>
        <dbReference type="ChEBI" id="CHEBI:456215"/>
        <dbReference type="EC" id="6.1.1.12"/>
    </reaction>
</comment>
<comment type="subunit">
    <text evidence="1">Homodimer.</text>
</comment>
<comment type="subcellular location">
    <subcellularLocation>
        <location evidence="1">Cytoplasm</location>
    </subcellularLocation>
</comment>
<comment type="similarity">
    <text evidence="1">Belongs to the class-II aminoacyl-tRNA synthetase family. Type 1 subfamily.</text>
</comment>
<accession>P67015</accession>
<accession>Q99TL9</accession>
<sequence length="588" mass="66599">MSKRTTYCGLVTEAFLGQEITLKGWVNNRRDLGGLIFVDLRDREGIVQVVFNPAFSEEALKIAETVRSEYVVEVQGTVTKRDPETVNPKIKTGQVEVQVTNIKVINKSETPPFSINEENVNVDENIRLKYRYLDLRRQELAQTFKMRHQITRSIRQYLDDEGFFDIETPVLTKSTPEGARDYLVPSRVHDGEFYALPQSPQLFKQLLMISGFDKYYQIVKCFRDEDLRADRQPEFTQVDIEMSFVDQEDVMQMGEEMLKKVVKEVKGVEINGAFPRMTYKEAMRRYGSDKPDTRFEMELIDVSQLGRDMDFKVFKDTVENDGEIKAIVAKGAAEQYTRKDMDALTEFVNIYGAKGLAWVKVVEDGLTGPIGRFFETENVETLLTLTGAEAGDLVMFVADKPNVVAQSLGALRVKLAKELGLIDETKLNFLWVTDWPLLEYDEDAKRYVAAHHPFTSPKEADIAKLGTAPEEAEANAYDIVLNGYELGGGSIRIHDGELQEKMFEVLGFTKEQAQEQFGFLLDAFKYGAPPHGGIALGLDRLVMLLTNRTNLRDTIAFPKTASATCLLTNAPGEVSDKQLEELSLRIRH</sequence>
<organism>
    <name type="scientific">Staphylococcus aureus (strain N315)</name>
    <dbReference type="NCBI Taxonomy" id="158879"/>
    <lineage>
        <taxon>Bacteria</taxon>
        <taxon>Bacillati</taxon>
        <taxon>Bacillota</taxon>
        <taxon>Bacilli</taxon>
        <taxon>Bacillales</taxon>
        <taxon>Staphylococcaceae</taxon>
        <taxon>Staphylococcus</taxon>
    </lineage>
</organism>
<evidence type="ECO:0000255" key="1">
    <source>
        <dbReference type="HAMAP-Rule" id="MF_00044"/>
    </source>
</evidence>
<name>SYD_STAAN</name>
<protein>
    <recommendedName>
        <fullName evidence="1">Aspartate--tRNA ligase</fullName>
        <ecNumber evidence="1">6.1.1.12</ecNumber>
    </recommendedName>
    <alternativeName>
        <fullName evidence="1">Aspartyl-tRNA synthetase</fullName>
        <shortName evidence="1">AspRS</shortName>
    </alternativeName>
</protein>
<reference key="1">
    <citation type="journal article" date="2001" name="Lancet">
        <title>Whole genome sequencing of meticillin-resistant Staphylococcus aureus.</title>
        <authorList>
            <person name="Kuroda M."/>
            <person name="Ohta T."/>
            <person name="Uchiyama I."/>
            <person name="Baba T."/>
            <person name="Yuzawa H."/>
            <person name="Kobayashi I."/>
            <person name="Cui L."/>
            <person name="Oguchi A."/>
            <person name="Aoki K."/>
            <person name="Nagai Y."/>
            <person name="Lian J.-Q."/>
            <person name="Ito T."/>
            <person name="Kanamori M."/>
            <person name="Matsumaru H."/>
            <person name="Maruyama A."/>
            <person name="Murakami H."/>
            <person name="Hosoyama A."/>
            <person name="Mizutani-Ui Y."/>
            <person name="Takahashi N.K."/>
            <person name="Sawano T."/>
            <person name="Inoue R."/>
            <person name="Kaito C."/>
            <person name="Sekimizu K."/>
            <person name="Hirakawa H."/>
            <person name="Kuhara S."/>
            <person name="Goto S."/>
            <person name="Yabuzaki J."/>
            <person name="Kanehisa M."/>
            <person name="Yamashita A."/>
            <person name="Oshima K."/>
            <person name="Furuya K."/>
            <person name="Yoshino C."/>
            <person name="Shiba T."/>
            <person name="Hattori M."/>
            <person name="Ogasawara N."/>
            <person name="Hayashi H."/>
            <person name="Hiramatsu K."/>
        </authorList>
    </citation>
    <scope>NUCLEOTIDE SEQUENCE [LARGE SCALE GENOMIC DNA]</scope>
    <source>
        <strain>N315</strain>
    </source>
</reference>
<reference key="2">
    <citation type="submission" date="2007-10" db="UniProtKB">
        <title>Shotgun proteomic analysis of total and membrane protein extracts of S. aureus strain N315.</title>
        <authorList>
            <person name="Vaezzadeh A.R."/>
            <person name="Deshusses J."/>
            <person name="Lescuyer P."/>
            <person name="Hochstrasser D.F."/>
        </authorList>
    </citation>
    <scope>IDENTIFICATION BY MASS SPECTROMETRY [LARGE SCALE ANALYSIS]</scope>
    <source>
        <strain>N315</strain>
    </source>
</reference>
<gene>
    <name evidence="1" type="primary">aspS</name>
    <name type="ordered locus">SA1456</name>
</gene>
<feature type="chain" id="PRO_0000110943" description="Aspartate--tRNA ligase">
    <location>
        <begin position="1"/>
        <end position="588"/>
    </location>
</feature>
<feature type="region of interest" description="Aspartate" evidence="1">
    <location>
        <begin position="201"/>
        <end position="204"/>
    </location>
</feature>
<feature type="binding site" evidence="1">
    <location>
        <position position="177"/>
    </location>
    <ligand>
        <name>L-aspartate</name>
        <dbReference type="ChEBI" id="CHEBI:29991"/>
    </ligand>
</feature>
<feature type="binding site" evidence="1">
    <location>
        <begin position="223"/>
        <end position="225"/>
    </location>
    <ligand>
        <name>ATP</name>
        <dbReference type="ChEBI" id="CHEBI:30616"/>
    </ligand>
</feature>
<feature type="binding site" evidence="1">
    <location>
        <position position="223"/>
    </location>
    <ligand>
        <name>L-aspartate</name>
        <dbReference type="ChEBI" id="CHEBI:29991"/>
    </ligand>
</feature>
<feature type="binding site" evidence="1">
    <location>
        <position position="232"/>
    </location>
    <ligand>
        <name>ATP</name>
        <dbReference type="ChEBI" id="CHEBI:30616"/>
    </ligand>
</feature>
<feature type="binding site" evidence="1">
    <location>
        <position position="451"/>
    </location>
    <ligand>
        <name>L-aspartate</name>
        <dbReference type="ChEBI" id="CHEBI:29991"/>
    </ligand>
</feature>
<feature type="binding site" evidence="1">
    <location>
        <position position="485"/>
    </location>
    <ligand>
        <name>ATP</name>
        <dbReference type="ChEBI" id="CHEBI:30616"/>
    </ligand>
</feature>
<feature type="binding site" evidence="1">
    <location>
        <position position="492"/>
    </location>
    <ligand>
        <name>L-aspartate</name>
        <dbReference type="ChEBI" id="CHEBI:29991"/>
    </ligand>
</feature>
<feature type="binding site" evidence="1">
    <location>
        <begin position="537"/>
        <end position="540"/>
    </location>
    <ligand>
        <name>ATP</name>
        <dbReference type="ChEBI" id="CHEBI:30616"/>
    </ligand>
</feature>
<dbReference type="EC" id="6.1.1.12" evidence="1"/>
<dbReference type="EMBL" id="BA000018">
    <property type="protein sequence ID" value="BAB42722.1"/>
    <property type="molecule type" value="Genomic_DNA"/>
</dbReference>
<dbReference type="PIR" id="E89945">
    <property type="entry name" value="E89945"/>
</dbReference>
<dbReference type="RefSeq" id="WP_000044799.1">
    <property type="nucleotide sequence ID" value="NC_002745.2"/>
</dbReference>
<dbReference type="SMR" id="P67015"/>
<dbReference type="EnsemblBacteria" id="BAB42722">
    <property type="protein sequence ID" value="BAB42722"/>
    <property type="gene ID" value="BAB42722"/>
</dbReference>
<dbReference type="KEGG" id="sau:SA1456"/>
<dbReference type="HOGENOM" id="CLU_014330_3_2_9"/>
<dbReference type="GO" id="GO:0005737">
    <property type="term" value="C:cytoplasm"/>
    <property type="evidence" value="ECO:0007669"/>
    <property type="project" value="UniProtKB-SubCell"/>
</dbReference>
<dbReference type="GO" id="GO:0004815">
    <property type="term" value="F:aspartate-tRNA ligase activity"/>
    <property type="evidence" value="ECO:0007669"/>
    <property type="project" value="UniProtKB-UniRule"/>
</dbReference>
<dbReference type="GO" id="GO:0005524">
    <property type="term" value="F:ATP binding"/>
    <property type="evidence" value="ECO:0007669"/>
    <property type="project" value="UniProtKB-UniRule"/>
</dbReference>
<dbReference type="GO" id="GO:0140096">
    <property type="term" value="F:catalytic activity, acting on a protein"/>
    <property type="evidence" value="ECO:0007669"/>
    <property type="project" value="UniProtKB-ARBA"/>
</dbReference>
<dbReference type="GO" id="GO:0003676">
    <property type="term" value="F:nucleic acid binding"/>
    <property type="evidence" value="ECO:0007669"/>
    <property type="project" value="InterPro"/>
</dbReference>
<dbReference type="GO" id="GO:0016740">
    <property type="term" value="F:transferase activity"/>
    <property type="evidence" value="ECO:0007669"/>
    <property type="project" value="UniProtKB-ARBA"/>
</dbReference>
<dbReference type="GO" id="GO:0006422">
    <property type="term" value="P:aspartyl-tRNA aminoacylation"/>
    <property type="evidence" value="ECO:0007669"/>
    <property type="project" value="UniProtKB-UniRule"/>
</dbReference>
<dbReference type="CDD" id="cd00777">
    <property type="entry name" value="AspRS_core"/>
    <property type="match status" value="1"/>
</dbReference>
<dbReference type="CDD" id="cd04317">
    <property type="entry name" value="EcAspRS_like_N"/>
    <property type="match status" value="1"/>
</dbReference>
<dbReference type="Gene3D" id="3.30.930.10">
    <property type="entry name" value="Bira Bifunctional Protein, Domain 2"/>
    <property type="match status" value="1"/>
</dbReference>
<dbReference type="Gene3D" id="3.30.1360.30">
    <property type="entry name" value="GAD-like domain"/>
    <property type="match status" value="1"/>
</dbReference>
<dbReference type="Gene3D" id="2.40.50.140">
    <property type="entry name" value="Nucleic acid-binding proteins"/>
    <property type="match status" value="1"/>
</dbReference>
<dbReference type="HAMAP" id="MF_00044">
    <property type="entry name" value="Asp_tRNA_synth_type1"/>
    <property type="match status" value="1"/>
</dbReference>
<dbReference type="InterPro" id="IPR004364">
    <property type="entry name" value="Aa-tRNA-synt_II"/>
</dbReference>
<dbReference type="InterPro" id="IPR006195">
    <property type="entry name" value="aa-tRNA-synth_II"/>
</dbReference>
<dbReference type="InterPro" id="IPR045864">
    <property type="entry name" value="aa-tRNA-synth_II/BPL/LPL"/>
</dbReference>
<dbReference type="InterPro" id="IPR004524">
    <property type="entry name" value="Asp-tRNA-ligase_1"/>
</dbReference>
<dbReference type="InterPro" id="IPR047089">
    <property type="entry name" value="Asp-tRNA-ligase_1_N"/>
</dbReference>
<dbReference type="InterPro" id="IPR002312">
    <property type="entry name" value="Asp/Asn-tRNA-synth_IIb"/>
</dbReference>
<dbReference type="InterPro" id="IPR047090">
    <property type="entry name" value="AspRS_core"/>
</dbReference>
<dbReference type="InterPro" id="IPR004115">
    <property type="entry name" value="GAD-like_sf"/>
</dbReference>
<dbReference type="InterPro" id="IPR029351">
    <property type="entry name" value="GAD_dom"/>
</dbReference>
<dbReference type="InterPro" id="IPR012340">
    <property type="entry name" value="NA-bd_OB-fold"/>
</dbReference>
<dbReference type="InterPro" id="IPR004365">
    <property type="entry name" value="NA-bd_OB_tRNA"/>
</dbReference>
<dbReference type="NCBIfam" id="TIGR00459">
    <property type="entry name" value="aspS_bact"/>
    <property type="match status" value="1"/>
</dbReference>
<dbReference type="NCBIfam" id="NF001750">
    <property type="entry name" value="PRK00476.1"/>
    <property type="match status" value="1"/>
</dbReference>
<dbReference type="PANTHER" id="PTHR22594:SF5">
    <property type="entry name" value="ASPARTATE--TRNA LIGASE, MITOCHONDRIAL"/>
    <property type="match status" value="1"/>
</dbReference>
<dbReference type="PANTHER" id="PTHR22594">
    <property type="entry name" value="ASPARTYL/LYSYL-TRNA SYNTHETASE"/>
    <property type="match status" value="1"/>
</dbReference>
<dbReference type="Pfam" id="PF02938">
    <property type="entry name" value="GAD"/>
    <property type="match status" value="1"/>
</dbReference>
<dbReference type="Pfam" id="PF00152">
    <property type="entry name" value="tRNA-synt_2"/>
    <property type="match status" value="1"/>
</dbReference>
<dbReference type="Pfam" id="PF01336">
    <property type="entry name" value="tRNA_anti-codon"/>
    <property type="match status" value="1"/>
</dbReference>
<dbReference type="PRINTS" id="PR01042">
    <property type="entry name" value="TRNASYNTHASP"/>
</dbReference>
<dbReference type="SUPFAM" id="SSF55681">
    <property type="entry name" value="Class II aaRS and biotin synthetases"/>
    <property type="match status" value="1"/>
</dbReference>
<dbReference type="SUPFAM" id="SSF55261">
    <property type="entry name" value="GAD domain-like"/>
    <property type="match status" value="1"/>
</dbReference>
<dbReference type="SUPFAM" id="SSF50249">
    <property type="entry name" value="Nucleic acid-binding proteins"/>
    <property type="match status" value="1"/>
</dbReference>
<dbReference type="PROSITE" id="PS50862">
    <property type="entry name" value="AA_TRNA_LIGASE_II"/>
    <property type="match status" value="1"/>
</dbReference>
<keyword id="KW-0030">Aminoacyl-tRNA synthetase</keyword>
<keyword id="KW-0067">ATP-binding</keyword>
<keyword id="KW-0963">Cytoplasm</keyword>
<keyword id="KW-0436">Ligase</keyword>
<keyword id="KW-0547">Nucleotide-binding</keyword>
<keyword id="KW-0648">Protein biosynthesis</keyword>